<name>PNP_CLOBB</name>
<evidence type="ECO:0000255" key="1">
    <source>
        <dbReference type="HAMAP-Rule" id="MF_01595"/>
    </source>
</evidence>
<feature type="chain" id="PRO_1000192471" description="Polyribonucleotide nucleotidyltransferase">
    <location>
        <begin position="1"/>
        <end position="704"/>
    </location>
</feature>
<feature type="domain" description="KH" evidence="1">
    <location>
        <begin position="552"/>
        <end position="611"/>
    </location>
</feature>
<feature type="domain" description="S1 motif" evidence="1">
    <location>
        <begin position="621"/>
        <end position="689"/>
    </location>
</feature>
<feature type="binding site" evidence="1">
    <location>
        <position position="485"/>
    </location>
    <ligand>
        <name>Mg(2+)</name>
        <dbReference type="ChEBI" id="CHEBI:18420"/>
    </ligand>
</feature>
<feature type="binding site" evidence="1">
    <location>
        <position position="491"/>
    </location>
    <ligand>
        <name>Mg(2+)</name>
        <dbReference type="ChEBI" id="CHEBI:18420"/>
    </ligand>
</feature>
<gene>
    <name evidence="1" type="primary">pnp</name>
    <name type="ordered locus">CLL_A1279</name>
</gene>
<accession>B2TJ61</accession>
<dbReference type="EC" id="2.7.7.8" evidence="1"/>
<dbReference type="EMBL" id="CP001056">
    <property type="protein sequence ID" value="ACD23650.1"/>
    <property type="molecule type" value="Genomic_DNA"/>
</dbReference>
<dbReference type="SMR" id="B2TJ61"/>
<dbReference type="KEGG" id="cbk:CLL_A1279"/>
<dbReference type="PATRIC" id="fig|935198.13.peg.1225"/>
<dbReference type="HOGENOM" id="CLU_004217_2_2_9"/>
<dbReference type="Proteomes" id="UP000001195">
    <property type="component" value="Chromosome"/>
</dbReference>
<dbReference type="GO" id="GO:0005829">
    <property type="term" value="C:cytosol"/>
    <property type="evidence" value="ECO:0007669"/>
    <property type="project" value="TreeGrafter"/>
</dbReference>
<dbReference type="GO" id="GO:0000175">
    <property type="term" value="F:3'-5'-RNA exonuclease activity"/>
    <property type="evidence" value="ECO:0007669"/>
    <property type="project" value="TreeGrafter"/>
</dbReference>
<dbReference type="GO" id="GO:0000287">
    <property type="term" value="F:magnesium ion binding"/>
    <property type="evidence" value="ECO:0007669"/>
    <property type="project" value="UniProtKB-UniRule"/>
</dbReference>
<dbReference type="GO" id="GO:0004654">
    <property type="term" value="F:polyribonucleotide nucleotidyltransferase activity"/>
    <property type="evidence" value="ECO:0007669"/>
    <property type="project" value="UniProtKB-UniRule"/>
</dbReference>
<dbReference type="GO" id="GO:0003723">
    <property type="term" value="F:RNA binding"/>
    <property type="evidence" value="ECO:0007669"/>
    <property type="project" value="UniProtKB-UniRule"/>
</dbReference>
<dbReference type="GO" id="GO:0006402">
    <property type="term" value="P:mRNA catabolic process"/>
    <property type="evidence" value="ECO:0007669"/>
    <property type="project" value="UniProtKB-UniRule"/>
</dbReference>
<dbReference type="GO" id="GO:0006396">
    <property type="term" value="P:RNA processing"/>
    <property type="evidence" value="ECO:0007669"/>
    <property type="project" value="InterPro"/>
</dbReference>
<dbReference type="CDD" id="cd02393">
    <property type="entry name" value="KH-I_PNPase"/>
    <property type="match status" value="1"/>
</dbReference>
<dbReference type="CDD" id="cd11363">
    <property type="entry name" value="RNase_PH_PNPase_1"/>
    <property type="match status" value="1"/>
</dbReference>
<dbReference type="CDD" id="cd11364">
    <property type="entry name" value="RNase_PH_PNPase_2"/>
    <property type="match status" value="1"/>
</dbReference>
<dbReference type="CDD" id="cd04472">
    <property type="entry name" value="S1_PNPase"/>
    <property type="match status" value="1"/>
</dbReference>
<dbReference type="FunFam" id="2.40.50.140:FF:000023">
    <property type="entry name" value="Polyribonucleotide nucleotidyltransferase"/>
    <property type="match status" value="1"/>
</dbReference>
<dbReference type="FunFam" id="3.30.1370.10:FF:000001">
    <property type="entry name" value="Polyribonucleotide nucleotidyltransferase"/>
    <property type="match status" value="1"/>
</dbReference>
<dbReference type="FunFam" id="3.30.230.70:FF:000001">
    <property type="entry name" value="Polyribonucleotide nucleotidyltransferase"/>
    <property type="match status" value="1"/>
</dbReference>
<dbReference type="FunFam" id="3.30.230.70:FF:000002">
    <property type="entry name" value="Polyribonucleotide nucleotidyltransferase"/>
    <property type="match status" value="1"/>
</dbReference>
<dbReference type="Gene3D" id="3.30.230.70">
    <property type="entry name" value="GHMP Kinase, N-terminal domain"/>
    <property type="match status" value="2"/>
</dbReference>
<dbReference type="Gene3D" id="3.30.1370.10">
    <property type="entry name" value="K Homology domain, type 1"/>
    <property type="match status" value="1"/>
</dbReference>
<dbReference type="Gene3D" id="2.40.50.140">
    <property type="entry name" value="Nucleic acid-binding proteins"/>
    <property type="match status" value="1"/>
</dbReference>
<dbReference type="HAMAP" id="MF_01595">
    <property type="entry name" value="PNPase"/>
    <property type="match status" value="1"/>
</dbReference>
<dbReference type="InterPro" id="IPR001247">
    <property type="entry name" value="ExoRNase_PH_dom1"/>
</dbReference>
<dbReference type="InterPro" id="IPR015847">
    <property type="entry name" value="ExoRNase_PH_dom2"/>
</dbReference>
<dbReference type="InterPro" id="IPR036345">
    <property type="entry name" value="ExoRNase_PH_dom2_sf"/>
</dbReference>
<dbReference type="InterPro" id="IPR004087">
    <property type="entry name" value="KH_dom"/>
</dbReference>
<dbReference type="InterPro" id="IPR004088">
    <property type="entry name" value="KH_dom_type_1"/>
</dbReference>
<dbReference type="InterPro" id="IPR036612">
    <property type="entry name" value="KH_dom_type_1_sf"/>
</dbReference>
<dbReference type="InterPro" id="IPR012340">
    <property type="entry name" value="NA-bd_OB-fold"/>
</dbReference>
<dbReference type="InterPro" id="IPR012162">
    <property type="entry name" value="PNPase"/>
</dbReference>
<dbReference type="InterPro" id="IPR027408">
    <property type="entry name" value="PNPase/RNase_PH_dom_sf"/>
</dbReference>
<dbReference type="InterPro" id="IPR015848">
    <property type="entry name" value="PNPase_PH_RNA-bd_bac/org-type"/>
</dbReference>
<dbReference type="InterPro" id="IPR036456">
    <property type="entry name" value="PNPase_PH_RNA-bd_sf"/>
</dbReference>
<dbReference type="InterPro" id="IPR020568">
    <property type="entry name" value="Ribosomal_Su5_D2-typ_SF"/>
</dbReference>
<dbReference type="InterPro" id="IPR003029">
    <property type="entry name" value="S1_domain"/>
</dbReference>
<dbReference type="NCBIfam" id="TIGR03591">
    <property type="entry name" value="polynuc_phos"/>
    <property type="match status" value="1"/>
</dbReference>
<dbReference type="NCBIfam" id="NF008805">
    <property type="entry name" value="PRK11824.1"/>
    <property type="match status" value="1"/>
</dbReference>
<dbReference type="PANTHER" id="PTHR11252">
    <property type="entry name" value="POLYRIBONUCLEOTIDE NUCLEOTIDYLTRANSFERASE"/>
    <property type="match status" value="1"/>
</dbReference>
<dbReference type="PANTHER" id="PTHR11252:SF0">
    <property type="entry name" value="POLYRIBONUCLEOTIDE NUCLEOTIDYLTRANSFERASE 1, MITOCHONDRIAL"/>
    <property type="match status" value="1"/>
</dbReference>
<dbReference type="Pfam" id="PF00013">
    <property type="entry name" value="KH_1"/>
    <property type="match status" value="1"/>
</dbReference>
<dbReference type="Pfam" id="PF03726">
    <property type="entry name" value="PNPase"/>
    <property type="match status" value="1"/>
</dbReference>
<dbReference type="Pfam" id="PF01138">
    <property type="entry name" value="RNase_PH"/>
    <property type="match status" value="2"/>
</dbReference>
<dbReference type="Pfam" id="PF03725">
    <property type="entry name" value="RNase_PH_C"/>
    <property type="match status" value="1"/>
</dbReference>
<dbReference type="Pfam" id="PF00575">
    <property type="entry name" value="S1"/>
    <property type="match status" value="1"/>
</dbReference>
<dbReference type="PIRSF" id="PIRSF005499">
    <property type="entry name" value="PNPase"/>
    <property type="match status" value="1"/>
</dbReference>
<dbReference type="SMART" id="SM00322">
    <property type="entry name" value="KH"/>
    <property type="match status" value="1"/>
</dbReference>
<dbReference type="SMART" id="SM00316">
    <property type="entry name" value="S1"/>
    <property type="match status" value="1"/>
</dbReference>
<dbReference type="SUPFAM" id="SSF54791">
    <property type="entry name" value="Eukaryotic type KH-domain (KH-domain type I)"/>
    <property type="match status" value="1"/>
</dbReference>
<dbReference type="SUPFAM" id="SSF50249">
    <property type="entry name" value="Nucleic acid-binding proteins"/>
    <property type="match status" value="1"/>
</dbReference>
<dbReference type="SUPFAM" id="SSF46915">
    <property type="entry name" value="Polynucleotide phosphorylase/guanosine pentaphosphate synthase (PNPase/GPSI), domain 3"/>
    <property type="match status" value="1"/>
</dbReference>
<dbReference type="SUPFAM" id="SSF55666">
    <property type="entry name" value="Ribonuclease PH domain 2-like"/>
    <property type="match status" value="2"/>
</dbReference>
<dbReference type="SUPFAM" id="SSF54211">
    <property type="entry name" value="Ribosomal protein S5 domain 2-like"/>
    <property type="match status" value="2"/>
</dbReference>
<dbReference type="PROSITE" id="PS50084">
    <property type="entry name" value="KH_TYPE_1"/>
    <property type="match status" value="1"/>
</dbReference>
<dbReference type="PROSITE" id="PS50126">
    <property type="entry name" value="S1"/>
    <property type="match status" value="1"/>
</dbReference>
<reference key="1">
    <citation type="submission" date="2008-04" db="EMBL/GenBank/DDBJ databases">
        <title>Complete sequence of Clostridium botulinum strain Eklund.</title>
        <authorList>
            <person name="Brinkac L.M."/>
            <person name="Brown J.L."/>
            <person name="Bruce D."/>
            <person name="Detter C."/>
            <person name="Munk C."/>
            <person name="Smith L.A."/>
            <person name="Smith T.J."/>
            <person name="Sutton G."/>
            <person name="Brettin T.S."/>
        </authorList>
    </citation>
    <scope>NUCLEOTIDE SEQUENCE [LARGE SCALE GENOMIC DNA]</scope>
    <source>
        <strain>Eklund 17B / Type B</strain>
    </source>
</reference>
<organism>
    <name type="scientific">Clostridium botulinum (strain Eklund 17B / Type B)</name>
    <dbReference type="NCBI Taxonomy" id="935198"/>
    <lineage>
        <taxon>Bacteria</taxon>
        <taxon>Bacillati</taxon>
        <taxon>Bacillota</taxon>
        <taxon>Clostridia</taxon>
        <taxon>Eubacteriales</taxon>
        <taxon>Clostridiaceae</taxon>
        <taxon>Clostridium</taxon>
    </lineage>
</organism>
<proteinExistence type="inferred from homology"/>
<protein>
    <recommendedName>
        <fullName evidence="1">Polyribonucleotide nucleotidyltransferase</fullName>
        <ecNumber evidence="1">2.7.7.8</ecNumber>
    </recommendedName>
    <alternativeName>
        <fullName evidence="1">Polynucleotide phosphorylase</fullName>
        <shortName evidence="1">PNPase</shortName>
    </alternativeName>
</protein>
<sequence>MNNVLSTNIAGKEMKVEFGKIGMLSNAATFMSYGDTVILTNVNASSEPRVGIDFFPLSVEYEERLYAVGKIPGGFIKREGRPSEKAILNGRAVDRTLRPLFPKGYRNDVQVVCTVVSVEKDNLPEILAINAASMALCLSSIPFTIPVAAVQVGLIDNNFIVNPNATEREESTLHLTVCATKERVMMIEAGGNEIPEDIMIDAIKFGFDECQKIINFQEEAVSKFGKEKDVPTLFTVDEEVEKDIKEFASDMIKEAMYITDKDERNAAIDAVNQKVKEEFGEKYEDKFGDIKEVLYNMQKKVVRHMLLKDKRRPDGRAFDEVRPLGCEIGLLPRTHGTGLFTRGLTQVMTVATLGAVGDIQILDGIDEAQSKRYMHHYNFPGYSVGEVKPLRGPGRREIGHGALAERALEPLIPSEEEFPYTIRLVSEVLSSNGSTSQASVCGSTLALLDAGVPLKRPAAGIAMGLITSEDLSEEQVLTDIQGIEDFFGDMDFKVAGTTEGITSIQVDTKLKGFSFNVVENAIRDARKARMTILDKINECISSPREDVSLYAPKTETIQIDPDKIRSVIGAGGKVINKIIQDTGVKIDIKEDGSVFVSSSDHAGVKEAIKIIEGLTKDVKAGEIYLGKVTKITTFGAFVEILPNKEGLVHISKLDKERVNKVEDVVSVGDEILVKVTEIDSQGRINLSRKDVLLDQENKENKEEK</sequence>
<keyword id="KW-0963">Cytoplasm</keyword>
<keyword id="KW-0460">Magnesium</keyword>
<keyword id="KW-0479">Metal-binding</keyword>
<keyword id="KW-0548">Nucleotidyltransferase</keyword>
<keyword id="KW-0694">RNA-binding</keyword>
<keyword id="KW-0808">Transferase</keyword>
<comment type="function">
    <text evidence="1">Involved in mRNA degradation. Catalyzes the phosphorolysis of single-stranded polyribonucleotides processively in the 3'- to 5'-direction.</text>
</comment>
<comment type="catalytic activity">
    <reaction evidence="1">
        <text>RNA(n+1) + phosphate = RNA(n) + a ribonucleoside 5'-diphosphate</text>
        <dbReference type="Rhea" id="RHEA:22096"/>
        <dbReference type="Rhea" id="RHEA-COMP:14527"/>
        <dbReference type="Rhea" id="RHEA-COMP:17342"/>
        <dbReference type="ChEBI" id="CHEBI:43474"/>
        <dbReference type="ChEBI" id="CHEBI:57930"/>
        <dbReference type="ChEBI" id="CHEBI:140395"/>
        <dbReference type="EC" id="2.7.7.8"/>
    </reaction>
</comment>
<comment type="cofactor">
    <cofactor evidence="1">
        <name>Mg(2+)</name>
        <dbReference type="ChEBI" id="CHEBI:18420"/>
    </cofactor>
</comment>
<comment type="subcellular location">
    <subcellularLocation>
        <location evidence="1">Cytoplasm</location>
    </subcellularLocation>
</comment>
<comment type="similarity">
    <text evidence="1">Belongs to the polyribonucleotide nucleotidyltransferase family.</text>
</comment>